<feature type="chain" id="PRO_1000129792" description="GTP-dependent dephospho-CoA kinase">
    <location>
        <begin position="1"/>
        <end position="172"/>
    </location>
</feature>
<feature type="binding site" evidence="1">
    <location>
        <position position="49"/>
    </location>
    <ligand>
        <name>GTP</name>
        <dbReference type="ChEBI" id="CHEBI:37565"/>
    </ligand>
</feature>
<feature type="binding site" evidence="1">
    <location>
        <position position="50"/>
    </location>
    <ligand>
        <name>GTP</name>
        <dbReference type="ChEBI" id="CHEBI:37565"/>
    </ligand>
</feature>
<feature type="binding site" evidence="1">
    <location>
        <position position="51"/>
    </location>
    <ligand>
        <name>GTP</name>
        <dbReference type="ChEBI" id="CHEBI:37565"/>
    </ligand>
</feature>
<feature type="binding site" evidence="1">
    <location>
        <position position="68"/>
    </location>
    <ligand>
        <name>GTP</name>
        <dbReference type="ChEBI" id="CHEBI:37565"/>
    </ligand>
</feature>
<feature type="binding site" evidence="1">
    <location>
        <position position="70"/>
    </location>
    <ligand>
        <name>GTP</name>
        <dbReference type="ChEBI" id="CHEBI:37565"/>
    </ligand>
</feature>
<feature type="binding site" evidence="1">
    <location>
        <position position="120"/>
    </location>
    <ligand>
        <name>GTP</name>
        <dbReference type="ChEBI" id="CHEBI:37565"/>
    </ligand>
</feature>
<name>DPCKG_PYRAR</name>
<comment type="function">
    <text evidence="1">Catalyzes the GTP-dependent phosphorylation of the 3'-hydroxyl group of dephosphocoenzyme A to form coenzyme A (CoA).</text>
</comment>
<comment type="catalytic activity">
    <reaction evidence="1">
        <text>3'-dephospho-CoA + GTP = GDP + CoA + H(+)</text>
        <dbReference type="Rhea" id="RHEA:61156"/>
        <dbReference type="ChEBI" id="CHEBI:15378"/>
        <dbReference type="ChEBI" id="CHEBI:37565"/>
        <dbReference type="ChEBI" id="CHEBI:57287"/>
        <dbReference type="ChEBI" id="CHEBI:57328"/>
        <dbReference type="ChEBI" id="CHEBI:58189"/>
        <dbReference type="EC" id="2.7.1.237"/>
    </reaction>
</comment>
<comment type="pathway">
    <text evidence="1">Cofactor biosynthesis; coenzyme A biosynthesis.</text>
</comment>
<comment type="similarity">
    <text evidence="1">Belongs to the GTP-dependent DPCK family.</text>
</comment>
<gene>
    <name type="ordered locus">Pars_1711</name>
</gene>
<sequence>MTCYKLSRRRDLFAFPYPLTVWRDPPRSVEVVRDFVESYDIRHIYTVGDVVTRNFLEYGLAPTSVAVDEKTRRGIKVEGLGLYKRVIRVNNPPGYITEEAWAAVEEAVEGGVLIKVDGEEDMLSLAFIKLAPPRSVVAYGHYLGALVAIPVDWYRDSILRLFNYLEQCQQKA</sequence>
<accession>A4WLJ5</accession>
<reference key="1">
    <citation type="submission" date="2007-04" db="EMBL/GenBank/DDBJ databases">
        <title>Complete sequence of Pyrobaculum arsenaticum DSM 13514.</title>
        <authorList>
            <consortium name="US DOE Joint Genome Institute"/>
            <person name="Copeland A."/>
            <person name="Lucas S."/>
            <person name="Lapidus A."/>
            <person name="Barry K."/>
            <person name="Glavina del Rio T."/>
            <person name="Dalin E."/>
            <person name="Tice H."/>
            <person name="Pitluck S."/>
            <person name="Chain P."/>
            <person name="Malfatti S."/>
            <person name="Shin M."/>
            <person name="Vergez L."/>
            <person name="Schmutz J."/>
            <person name="Larimer F."/>
            <person name="Land M."/>
            <person name="Hauser L."/>
            <person name="Kyrpides N."/>
            <person name="Mikhailova N."/>
            <person name="Cozen A.E."/>
            <person name="Fitz-Gibbon S.T."/>
            <person name="House C.H."/>
            <person name="Saltikov C."/>
            <person name="Lowe T.M."/>
            <person name="Richardson P."/>
        </authorList>
    </citation>
    <scope>NUCLEOTIDE SEQUENCE [LARGE SCALE GENOMIC DNA]</scope>
    <source>
        <strain>ATCC 700994 / DSM 13514 / JCM 11321 / PZ6</strain>
    </source>
</reference>
<protein>
    <recommendedName>
        <fullName evidence="1">GTP-dependent dephospho-CoA kinase</fullName>
        <ecNumber evidence="1">2.7.1.237</ecNumber>
    </recommendedName>
    <alternativeName>
        <fullName evidence="1">Dephospho-coenzyme A kinase</fullName>
        <shortName evidence="1">DPCK</shortName>
    </alternativeName>
</protein>
<proteinExistence type="inferred from homology"/>
<keyword id="KW-0173">Coenzyme A biosynthesis</keyword>
<keyword id="KW-0342">GTP-binding</keyword>
<keyword id="KW-0418">Kinase</keyword>
<keyword id="KW-0547">Nucleotide-binding</keyword>
<keyword id="KW-0808">Transferase</keyword>
<evidence type="ECO:0000255" key="1">
    <source>
        <dbReference type="HAMAP-Rule" id="MF_00590"/>
    </source>
</evidence>
<dbReference type="EC" id="2.7.1.237" evidence="1"/>
<dbReference type="EMBL" id="CP000660">
    <property type="protein sequence ID" value="ABP51262.1"/>
    <property type="molecule type" value="Genomic_DNA"/>
</dbReference>
<dbReference type="SMR" id="A4WLJ5"/>
<dbReference type="STRING" id="340102.Pars_1711"/>
<dbReference type="KEGG" id="pas:Pars_1711"/>
<dbReference type="HOGENOM" id="CLU_120795_1_0_2"/>
<dbReference type="OrthoDB" id="15447at2157"/>
<dbReference type="PhylomeDB" id="A4WLJ5"/>
<dbReference type="UniPathway" id="UPA00241"/>
<dbReference type="Proteomes" id="UP000001567">
    <property type="component" value="Chromosome"/>
</dbReference>
<dbReference type="GO" id="GO:0005525">
    <property type="term" value="F:GTP binding"/>
    <property type="evidence" value="ECO:0007669"/>
    <property type="project" value="UniProtKB-UniRule"/>
</dbReference>
<dbReference type="GO" id="GO:0016301">
    <property type="term" value="F:kinase activity"/>
    <property type="evidence" value="ECO:0007669"/>
    <property type="project" value="UniProtKB-UniRule"/>
</dbReference>
<dbReference type="GO" id="GO:0015937">
    <property type="term" value="P:coenzyme A biosynthetic process"/>
    <property type="evidence" value="ECO:0007669"/>
    <property type="project" value="UniProtKB-UniRule"/>
</dbReference>
<dbReference type="HAMAP" id="MF_00590">
    <property type="entry name" value="Dephospho_CoA_kinase_GTP_dep"/>
    <property type="match status" value="1"/>
</dbReference>
<dbReference type="InterPro" id="IPR007164">
    <property type="entry name" value="GTP-dep_dephospho-CoA_kin"/>
</dbReference>
<dbReference type="PANTHER" id="PTHR40732:SF1">
    <property type="entry name" value="GTP-DEPENDENT DEPHOSPHO-COA KINASE"/>
    <property type="match status" value="1"/>
</dbReference>
<dbReference type="PANTHER" id="PTHR40732">
    <property type="entry name" value="UPF0218 PROTEIN TK1697"/>
    <property type="match status" value="1"/>
</dbReference>
<dbReference type="Pfam" id="PF04019">
    <property type="entry name" value="DUF359"/>
    <property type="match status" value="1"/>
</dbReference>
<organism>
    <name type="scientific">Pyrobaculum arsenaticum (strain DSM 13514 / JCM 11321 / PZ6)</name>
    <dbReference type="NCBI Taxonomy" id="340102"/>
    <lineage>
        <taxon>Archaea</taxon>
        <taxon>Thermoproteota</taxon>
        <taxon>Thermoprotei</taxon>
        <taxon>Thermoproteales</taxon>
        <taxon>Thermoproteaceae</taxon>
        <taxon>Pyrobaculum</taxon>
    </lineage>
</organism>